<comment type="function">
    <text evidence="3">Involved in the metabolism of galactose. Catalyzes the conversion of UDP-galactose (UDP-Gal) to UDP-glucose (UDP-Glc) through a mechanism involving the transient reduction of NAD.</text>
</comment>
<comment type="catalytic activity">
    <reaction>
        <text>UDP-alpha-D-glucose = UDP-alpha-D-galactose</text>
        <dbReference type="Rhea" id="RHEA:22168"/>
        <dbReference type="ChEBI" id="CHEBI:58885"/>
        <dbReference type="ChEBI" id="CHEBI:66914"/>
        <dbReference type="EC" id="5.1.3.2"/>
    </reaction>
</comment>
<comment type="cofactor">
    <cofactor evidence="1">
        <name>NAD(+)</name>
        <dbReference type="ChEBI" id="CHEBI:57540"/>
    </cofactor>
</comment>
<comment type="pathway">
    <text>Carbohydrate metabolism; galactose metabolism.</text>
</comment>
<comment type="subunit">
    <text evidence="1">Homodimer.</text>
</comment>
<comment type="similarity">
    <text evidence="4">Belongs to the NAD(P)-dependent epimerase/dehydratase family.</text>
</comment>
<comment type="sequence caution" evidence="4">
    <conflict type="erroneous initiation">
        <sequence resource="EMBL-CDS" id="ABK73226"/>
    </conflict>
    <text>Extended N-terminus.</text>
</comment>
<comment type="sequence caution" evidence="4">
    <conflict type="erroneous initiation">
        <sequence resource="EMBL-CDS" id="AFP42416"/>
    </conflict>
    <text>Extended N-terminus.</text>
</comment>
<proteinExistence type="evidence at protein level"/>
<dbReference type="EC" id="5.1.3.2"/>
<dbReference type="EMBL" id="CP000480">
    <property type="protein sequence ID" value="ABK73226.1"/>
    <property type="status" value="ALT_INIT"/>
    <property type="molecule type" value="Genomic_DNA"/>
</dbReference>
<dbReference type="EMBL" id="CP001663">
    <property type="protein sequence ID" value="AFP42416.1"/>
    <property type="status" value="ALT_INIT"/>
    <property type="molecule type" value="Genomic_DNA"/>
</dbReference>
<dbReference type="RefSeq" id="YP_890363.1">
    <property type="nucleotide sequence ID" value="NC_008596.1"/>
</dbReference>
<dbReference type="SMR" id="A0R5C5"/>
<dbReference type="STRING" id="246196.MSMEG_6142"/>
<dbReference type="PaxDb" id="246196-MSMEI_5983"/>
<dbReference type="KEGG" id="msg:MSMEI_5983"/>
<dbReference type="KEGG" id="msm:MSMEG_6142"/>
<dbReference type="PATRIC" id="fig|246196.19.peg.5981"/>
<dbReference type="eggNOG" id="COG0451">
    <property type="taxonomic scope" value="Bacteria"/>
</dbReference>
<dbReference type="OrthoDB" id="9801785at2"/>
<dbReference type="UniPathway" id="UPA00214"/>
<dbReference type="Proteomes" id="UP000000757">
    <property type="component" value="Chromosome"/>
</dbReference>
<dbReference type="Proteomes" id="UP000006158">
    <property type="component" value="Chromosome"/>
</dbReference>
<dbReference type="GO" id="GO:0003978">
    <property type="term" value="F:UDP-glucose 4-epimerase activity"/>
    <property type="evidence" value="ECO:0007669"/>
    <property type="project" value="UniProtKB-EC"/>
</dbReference>
<dbReference type="GO" id="GO:0006012">
    <property type="term" value="P:galactose metabolic process"/>
    <property type="evidence" value="ECO:0007669"/>
    <property type="project" value="UniProtKB-UniPathway"/>
</dbReference>
<dbReference type="Gene3D" id="3.40.50.720">
    <property type="entry name" value="NAD(P)-binding Rossmann-like Domain"/>
    <property type="match status" value="1"/>
</dbReference>
<dbReference type="Gene3D" id="3.90.25.10">
    <property type="entry name" value="UDP-galactose 4-epimerase, domain 1"/>
    <property type="match status" value="1"/>
</dbReference>
<dbReference type="InterPro" id="IPR016040">
    <property type="entry name" value="NAD(P)-bd_dom"/>
</dbReference>
<dbReference type="InterPro" id="IPR036291">
    <property type="entry name" value="NAD(P)-bd_dom_sf"/>
</dbReference>
<dbReference type="PANTHER" id="PTHR43000">
    <property type="entry name" value="DTDP-D-GLUCOSE 4,6-DEHYDRATASE-RELATED"/>
    <property type="match status" value="1"/>
</dbReference>
<dbReference type="Pfam" id="PF16363">
    <property type="entry name" value="GDP_Man_Dehyd"/>
    <property type="match status" value="1"/>
</dbReference>
<dbReference type="SUPFAM" id="SSF51735">
    <property type="entry name" value="NAD(P)-binding Rossmann-fold domains"/>
    <property type="match status" value="1"/>
</dbReference>
<dbReference type="PROSITE" id="PS00061">
    <property type="entry name" value="ADH_SHORT"/>
    <property type="match status" value="1"/>
</dbReference>
<evidence type="ECO:0000250" key="1"/>
<evidence type="ECO:0000255" key="2">
    <source>
        <dbReference type="PROSITE-ProRule" id="PRU10001"/>
    </source>
</evidence>
<evidence type="ECO:0000269" key="3">
    <source>
    </source>
</evidence>
<evidence type="ECO:0000305" key="4"/>
<name>GALE_MYCS2</name>
<keyword id="KW-0119">Carbohydrate metabolism</keyword>
<keyword id="KW-0903">Direct protein sequencing</keyword>
<keyword id="KW-0299">Galactose metabolism</keyword>
<keyword id="KW-0413">Isomerase</keyword>
<keyword id="KW-0520">NAD</keyword>
<keyword id="KW-1185">Reference proteome</keyword>
<feature type="chain" id="PRO_0000420763" description="UDP-glucose 4-epimerase">
    <location>
        <begin position="1"/>
        <end position="313"/>
    </location>
</feature>
<feature type="active site" description="Proton acceptor" evidence="2">
    <location>
        <position position="146"/>
    </location>
</feature>
<feature type="binding site" evidence="1">
    <location>
        <begin position="11"/>
        <end position="12"/>
    </location>
    <ligand>
        <name>NAD(+)</name>
        <dbReference type="ChEBI" id="CHEBI:57540"/>
    </ligand>
</feature>
<feature type="binding site" evidence="1">
    <location>
        <begin position="31"/>
        <end position="36"/>
    </location>
    <ligand>
        <name>NAD(+)</name>
        <dbReference type="ChEBI" id="CHEBI:57540"/>
    </ligand>
</feature>
<feature type="binding site" evidence="1">
    <location>
        <begin position="56"/>
        <end position="57"/>
    </location>
    <ligand>
        <name>NAD(+)</name>
        <dbReference type="ChEBI" id="CHEBI:57540"/>
    </ligand>
</feature>
<feature type="binding site" evidence="1">
    <location>
        <begin position="77"/>
        <end position="81"/>
    </location>
    <ligand>
        <name>NAD(+)</name>
        <dbReference type="ChEBI" id="CHEBI:57540"/>
    </ligand>
</feature>
<feature type="binding site" evidence="1">
    <location>
        <position position="121"/>
    </location>
    <ligand>
        <name>substrate</name>
    </ligand>
</feature>
<feature type="binding site" evidence="1">
    <location>
        <position position="146"/>
    </location>
    <ligand>
        <name>NAD(+)</name>
        <dbReference type="ChEBI" id="CHEBI:57540"/>
    </ligand>
</feature>
<feature type="binding site" evidence="1">
    <location>
        <position position="146"/>
    </location>
    <ligand>
        <name>substrate</name>
    </ligand>
</feature>
<feature type="binding site" evidence="1">
    <location>
        <position position="150"/>
    </location>
    <ligand>
        <name>NAD(+)</name>
        <dbReference type="ChEBI" id="CHEBI:57540"/>
    </ligand>
</feature>
<feature type="binding site" evidence="1">
    <location>
        <position position="175"/>
    </location>
    <ligand>
        <name>substrate</name>
    </ligand>
</feature>
<feature type="binding site" evidence="1">
    <location>
        <begin position="189"/>
        <end position="190"/>
    </location>
    <ligand>
        <name>substrate</name>
    </ligand>
</feature>
<feature type="binding site" evidence="1">
    <location>
        <begin position="204"/>
        <end position="206"/>
    </location>
    <ligand>
        <name>substrate</name>
    </ligand>
</feature>
<feature type="binding site" evidence="1">
    <location>
        <position position="213"/>
    </location>
    <ligand>
        <name>substrate</name>
    </ligand>
</feature>
<feature type="binding site" evidence="1">
    <location>
        <begin position="271"/>
        <end position="274"/>
    </location>
    <ligand>
        <name>substrate</name>
    </ligand>
</feature>
<gene>
    <name type="ordered locus">MSMEG_6142</name>
    <name type="ordered locus">MSMEI_5983</name>
</gene>
<organism>
    <name type="scientific">Mycolicibacterium smegmatis (strain ATCC 700084 / mc(2)155)</name>
    <name type="common">Mycobacterium smegmatis</name>
    <dbReference type="NCBI Taxonomy" id="246196"/>
    <lineage>
        <taxon>Bacteria</taxon>
        <taxon>Bacillati</taxon>
        <taxon>Actinomycetota</taxon>
        <taxon>Actinomycetes</taxon>
        <taxon>Mycobacteriales</taxon>
        <taxon>Mycobacteriaceae</taxon>
        <taxon>Mycolicibacterium</taxon>
    </lineage>
</organism>
<protein>
    <recommendedName>
        <fullName>UDP-glucose 4-epimerase</fullName>
        <ecNumber>5.1.3.2</ecNumber>
    </recommendedName>
    <alternativeName>
        <fullName>UDP-galactose 4-epimerase</fullName>
    </alternativeName>
    <alternativeName>
        <fullName>Uridine diphosphate galactose 4-epimerase</fullName>
    </alternativeName>
</protein>
<accession>A0R5C5</accession>
<sequence length="313" mass="33217">MRTLVTGAAGFIGSTLVDRLLADGHGVVGLDDLSSGRAENLHSAENSDKFEFVKADIVDADLTGLLAEFKPEVIFHLAAQISVKRSVDDPPFDATVNVVGTVRLAEAARLAGVRKVVHTSSGGSVYGTPPAYPTSEDMPVNPASPYAAGKVAGEVYLNMYRNLYDLDCSHIAPANVYGPRQDPHGEAGVVAIFSEALLAGRTTKIFGDGSDTRDYVFVDDVVDAFVRAGGPAGGGQRFNVGTGVETSTRELHTAIAGAVGAPDEPEFHPPRLGDLRRSRLDNTRAREVLGWQPQVALAEGIAKTVEFFRNKSQ</sequence>
<reference key="1">
    <citation type="journal article" date="2006" name="Nucleic Acids Res.">
        <title>ICDS database: interrupted CoDing sequences in prokaryotic genomes.</title>
        <authorList>
            <person name="Perrodou E."/>
            <person name="Deshayes C."/>
            <person name="Muller J."/>
            <person name="Schaeffer C."/>
            <person name="Van Dorsselaer A."/>
            <person name="Ripp R."/>
            <person name="Poch O."/>
            <person name="Reyrat J.M."/>
            <person name="Lecompte O."/>
        </authorList>
    </citation>
    <scope>NUCLEOTIDE SEQUENCE [LARGE SCALE GENOMIC DNA]</scope>
    <source>
        <strain>ATCC 700084 / mc(2)155</strain>
    </source>
</reference>
<reference key="2">
    <citation type="submission" date="2006-10" db="EMBL/GenBank/DDBJ databases">
        <authorList>
            <person name="Fleischmann R.D."/>
            <person name="Dodson R.J."/>
            <person name="Haft D.H."/>
            <person name="Merkel J.S."/>
            <person name="Nelson W.C."/>
            <person name="Fraser C.M."/>
        </authorList>
    </citation>
    <scope>NUCLEOTIDE SEQUENCE [LARGE SCALE GENOMIC DNA]</scope>
    <source>
        <strain>ATCC 700084 / mc(2)155</strain>
    </source>
</reference>
<reference key="3">
    <citation type="journal article" date="2007" name="Genome Biol.">
        <title>Interrupted coding sequences in Mycobacterium smegmatis: authentic mutations or sequencing errors?</title>
        <authorList>
            <person name="Deshayes C."/>
            <person name="Perrodou E."/>
            <person name="Gallien S."/>
            <person name="Euphrasie D."/>
            <person name="Schaeffer C."/>
            <person name="Van-Dorsselaer A."/>
            <person name="Poch O."/>
            <person name="Lecompte O."/>
            <person name="Reyrat J.-M."/>
        </authorList>
    </citation>
    <scope>NUCLEOTIDE SEQUENCE [LARGE SCALE GENOMIC DNA]</scope>
    <source>
        <strain>ATCC 700084 / mc(2)155</strain>
    </source>
</reference>
<reference key="4">
    <citation type="journal article" date="2009" name="Genome Res.">
        <title>Ortho-proteogenomics: multiple proteomes investigation through orthology and a new MS-based protocol.</title>
        <authorList>
            <person name="Gallien S."/>
            <person name="Perrodou E."/>
            <person name="Carapito C."/>
            <person name="Deshayes C."/>
            <person name="Reyrat J.-M."/>
            <person name="Van Dorsselaer A."/>
            <person name="Poch O."/>
            <person name="Schaeffer C."/>
            <person name="Lecompte O."/>
        </authorList>
    </citation>
    <scope>NUCLEOTIDE SEQUENCE [LARGE SCALE GENOMIC DNA]</scope>
    <source>
        <strain>ATCC 700084 / mc(2)155</strain>
    </source>
</reference>
<reference key="5">
    <citation type="journal article" date="1997" name="Tuber. Lung Dis.">
        <title>Biosynthetic origin of mycobacterial cell wall galactofuranosyl residues.</title>
        <authorList>
            <person name="Weston A."/>
            <person name="Stern R.J."/>
            <person name="Lee R.E."/>
            <person name="Nassau P.M."/>
            <person name="Monsey D."/>
            <person name="Martin S.L."/>
            <person name="Scherman M.S."/>
            <person name="Besra G.S."/>
            <person name="Duncan K."/>
            <person name="McNeil M.R."/>
        </authorList>
    </citation>
    <scope>PROTEIN SEQUENCE OF 1-26</scope>
    <scope>FUNCTION</scope>
</reference>